<name>IKBA_HUMAN</name>
<organism>
    <name type="scientific">Homo sapiens</name>
    <name type="common">Human</name>
    <dbReference type="NCBI Taxonomy" id="9606"/>
    <lineage>
        <taxon>Eukaryota</taxon>
        <taxon>Metazoa</taxon>
        <taxon>Chordata</taxon>
        <taxon>Craniata</taxon>
        <taxon>Vertebrata</taxon>
        <taxon>Euteleostomi</taxon>
        <taxon>Mammalia</taxon>
        <taxon>Eutheria</taxon>
        <taxon>Euarchontoglires</taxon>
        <taxon>Primates</taxon>
        <taxon>Haplorrhini</taxon>
        <taxon>Catarrhini</taxon>
        <taxon>Hominidae</taxon>
        <taxon>Homo</taxon>
    </lineage>
</organism>
<dbReference type="EMBL" id="M69043">
    <property type="protein sequence ID" value="AAA16489.1"/>
    <property type="molecule type" value="mRNA"/>
</dbReference>
<dbReference type="EMBL" id="AJ249294">
    <property type="protein sequence ID" value="CAB65556.2"/>
    <property type="molecule type" value="Genomic_DNA"/>
</dbReference>
<dbReference type="EMBL" id="AJ249295">
    <property type="protein sequence ID" value="CAB65556.2"/>
    <property type="status" value="JOINED"/>
    <property type="molecule type" value="Genomic_DNA"/>
</dbReference>
<dbReference type="EMBL" id="AJ249283">
    <property type="protein sequence ID" value="CAB65556.2"/>
    <property type="status" value="JOINED"/>
    <property type="molecule type" value="Genomic_DNA"/>
</dbReference>
<dbReference type="EMBL" id="AJ249284">
    <property type="protein sequence ID" value="CAB65556.2"/>
    <property type="status" value="JOINED"/>
    <property type="molecule type" value="Genomic_DNA"/>
</dbReference>
<dbReference type="EMBL" id="AJ249285">
    <property type="protein sequence ID" value="CAB65556.2"/>
    <property type="status" value="JOINED"/>
    <property type="molecule type" value="Genomic_DNA"/>
</dbReference>
<dbReference type="EMBL" id="AJ249286">
    <property type="protein sequence ID" value="CAB65556.2"/>
    <property type="status" value="JOINED"/>
    <property type="molecule type" value="Genomic_DNA"/>
</dbReference>
<dbReference type="EMBL" id="AY033600">
    <property type="protein sequence ID" value="AAK51149.1"/>
    <property type="molecule type" value="mRNA"/>
</dbReference>
<dbReference type="EMBL" id="BT007091">
    <property type="protein sequence ID" value="AAP35754.1"/>
    <property type="molecule type" value="mRNA"/>
</dbReference>
<dbReference type="EMBL" id="AY496422">
    <property type="protein sequence ID" value="AAR29599.1"/>
    <property type="molecule type" value="Genomic_DNA"/>
</dbReference>
<dbReference type="EMBL" id="AK313421">
    <property type="protein sequence ID" value="BAG36213.1"/>
    <property type="molecule type" value="mRNA"/>
</dbReference>
<dbReference type="EMBL" id="AL133163">
    <property type="status" value="NOT_ANNOTATED_CDS"/>
    <property type="molecule type" value="Genomic_DNA"/>
</dbReference>
<dbReference type="EMBL" id="CH471078">
    <property type="protein sequence ID" value="EAW65875.1"/>
    <property type="molecule type" value="Genomic_DNA"/>
</dbReference>
<dbReference type="EMBL" id="BC002601">
    <property type="protein sequence ID" value="AAH02601.1"/>
    <property type="molecule type" value="mRNA"/>
</dbReference>
<dbReference type="EMBL" id="BC004983">
    <property type="protein sequence ID" value="AAH04983.1"/>
    <property type="molecule type" value="mRNA"/>
</dbReference>
<dbReference type="CCDS" id="CCDS9656.1"/>
<dbReference type="PIR" id="A39935">
    <property type="entry name" value="A39935"/>
</dbReference>
<dbReference type="RefSeq" id="NP_065390.1">
    <property type="nucleotide sequence ID" value="NM_020529.3"/>
</dbReference>
<dbReference type="PDB" id="1IKN">
    <property type="method" value="X-ray"/>
    <property type="resolution" value="2.30 A"/>
    <property type="chains" value="D=67-302"/>
</dbReference>
<dbReference type="PDB" id="1NFI">
    <property type="method" value="X-ray"/>
    <property type="resolution" value="2.70 A"/>
    <property type="chains" value="E/F=70-282"/>
</dbReference>
<dbReference type="PDB" id="6TTU">
    <property type="method" value="EM"/>
    <property type="resolution" value="3.70 A"/>
    <property type="chains" value="I=21-41"/>
</dbReference>
<dbReference type="PDB" id="6Y1J">
    <property type="method" value="X-ray"/>
    <property type="resolution" value="1.13 A"/>
    <property type="chains" value="P=57-69"/>
</dbReference>
<dbReference type="PDBsum" id="1IKN"/>
<dbReference type="PDBsum" id="1NFI"/>
<dbReference type="PDBsum" id="6TTU"/>
<dbReference type="PDBsum" id="6Y1J"/>
<dbReference type="BMRB" id="P25963"/>
<dbReference type="SMR" id="P25963"/>
<dbReference type="BioGRID" id="110859">
    <property type="interactions" value="217"/>
</dbReference>
<dbReference type="CORUM" id="P25963"/>
<dbReference type="DIP" id="DIP-139N"/>
<dbReference type="ELM" id="P25963"/>
<dbReference type="FunCoup" id="P25963">
    <property type="interactions" value="1808"/>
</dbReference>
<dbReference type="IntAct" id="P25963">
    <property type="interactions" value="99"/>
</dbReference>
<dbReference type="MINT" id="P25963"/>
<dbReference type="STRING" id="9606.ENSP00000216797"/>
<dbReference type="BindingDB" id="P25963"/>
<dbReference type="ChEMBL" id="CHEMBL2898"/>
<dbReference type="DrugBank" id="DB00945">
    <property type="generic name" value="Acetylsalicylic acid"/>
</dbReference>
<dbReference type="DrugBank" id="DB06543">
    <property type="generic name" value="Astaxanthin"/>
</dbReference>
<dbReference type="DrugBank" id="DB05983">
    <property type="generic name" value="Bardoxolone methyl"/>
</dbReference>
<dbReference type="DrugBank" id="DB15462">
    <property type="generic name" value="Fucoxanthin"/>
</dbReference>
<dbReference type="DrugBank" id="DB12881">
    <property type="generic name" value="Indole-3-carbinol"/>
</dbReference>
<dbReference type="iPTMnet" id="P25963"/>
<dbReference type="MetOSite" id="P25963"/>
<dbReference type="PhosphoSitePlus" id="P25963"/>
<dbReference type="BioMuta" id="NFKBIA"/>
<dbReference type="DMDM" id="126682"/>
<dbReference type="jPOST" id="P25963"/>
<dbReference type="MassIVE" id="P25963"/>
<dbReference type="PaxDb" id="9606-ENSP00000216797"/>
<dbReference type="PeptideAtlas" id="P25963"/>
<dbReference type="ProteomicsDB" id="54304"/>
<dbReference type="Pumba" id="P25963"/>
<dbReference type="Antibodypedia" id="3541">
    <property type="antibodies" value="1897 antibodies from 50 providers"/>
</dbReference>
<dbReference type="DNASU" id="4792"/>
<dbReference type="Ensembl" id="ENST00000216797.10">
    <property type="protein sequence ID" value="ENSP00000216797.6"/>
    <property type="gene ID" value="ENSG00000100906.12"/>
</dbReference>
<dbReference type="GeneID" id="4792"/>
<dbReference type="KEGG" id="hsa:4792"/>
<dbReference type="MANE-Select" id="ENST00000216797.10">
    <property type="protein sequence ID" value="ENSP00000216797.6"/>
    <property type="RefSeq nucleotide sequence ID" value="NM_020529.3"/>
    <property type="RefSeq protein sequence ID" value="NP_065390.1"/>
</dbReference>
<dbReference type="UCSC" id="uc001wtf.5">
    <property type="organism name" value="human"/>
</dbReference>
<dbReference type="AGR" id="HGNC:7797"/>
<dbReference type="CTD" id="4792"/>
<dbReference type="DisGeNET" id="4792"/>
<dbReference type="GeneCards" id="NFKBIA"/>
<dbReference type="HGNC" id="HGNC:7797">
    <property type="gene designation" value="NFKBIA"/>
</dbReference>
<dbReference type="HPA" id="ENSG00000100906">
    <property type="expression patterns" value="Tissue enhanced (bone)"/>
</dbReference>
<dbReference type="MalaCards" id="NFKBIA"/>
<dbReference type="MIM" id="164008">
    <property type="type" value="gene"/>
</dbReference>
<dbReference type="MIM" id="612132">
    <property type="type" value="phenotype"/>
</dbReference>
<dbReference type="neXtProt" id="NX_P25963"/>
<dbReference type="OpenTargets" id="ENSG00000100906"/>
<dbReference type="Orphanet" id="251579">
    <property type="disease" value="Giant cell glioblastoma"/>
</dbReference>
<dbReference type="Orphanet" id="251576">
    <property type="disease" value="Gliosarcoma"/>
</dbReference>
<dbReference type="Orphanet" id="98813">
    <property type="disease" value="Hypohidrotic ectodermal dysplasia with immunodeficiency"/>
</dbReference>
<dbReference type="Orphanet" id="150">
    <property type="disease" value="Nasopharyngeal carcinoma"/>
</dbReference>
<dbReference type="PharmGKB" id="PA31601"/>
<dbReference type="VEuPathDB" id="HostDB:ENSG00000100906"/>
<dbReference type="eggNOG" id="KOG0504">
    <property type="taxonomic scope" value="Eukaryota"/>
</dbReference>
<dbReference type="GeneTree" id="ENSGT00940000162733"/>
<dbReference type="InParanoid" id="P25963"/>
<dbReference type="OMA" id="EIRIQPQ"/>
<dbReference type="OrthoDB" id="20727at2759"/>
<dbReference type="PAN-GO" id="P25963">
    <property type="GO annotations" value="4 GO annotations based on evolutionary models"/>
</dbReference>
<dbReference type="PhylomeDB" id="P25963"/>
<dbReference type="TreeFam" id="TF320166"/>
<dbReference type="PathwayCommons" id="P25963"/>
<dbReference type="Reactome" id="R-HSA-1169091">
    <property type="pathway name" value="Activation of NF-kappaB in B cells"/>
</dbReference>
<dbReference type="Reactome" id="R-HSA-1810476">
    <property type="pathway name" value="RIP-mediated NFkB activation via ZBP1"/>
</dbReference>
<dbReference type="Reactome" id="R-HSA-202424">
    <property type="pathway name" value="Downstream TCR signaling"/>
</dbReference>
<dbReference type="Reactome" id="R-HSA-209560">
    <property type="pathway name" value="NF-kB is activated and signals survival"/>
</dbReference>
<dbReference type="Reactome" id="R-HSA-2871837">
    <property type="pathway name" value="FCERI mediated NF-kB activation"/>
</dbReference>
<dbReference type="Reactome" id="R-HSA-445989">
    <property type="pathway name" value="TAK1-dependent IKK and NF-kappa-B activation"/>
</dbReference>
<dbReference type="Reactome" id="R-HSA-4755510">
    <property type="pathway name" value="SUMOylation of immune response proteins"/>
</dbReference>
<dbReference type="Reactome" id="R-HSA-5603029">
    <property type="pathway name" value="IkBA variant leads to EDA-ID"/>
</dbReference>
<dbReference type="Reactome" id="R-HSA-5607764">
    <property type="pathway name" value="CLEC7A (Dectin-1) signaling"/>
</dbReference>
<dbReference type="Reactome" id="R-HSA-5689880">
    <property type="pathway name" value="Ub-specific processing proteases"/>
</dbReference>
<dbReference type="Reactome" id="R-HSA-9020702">
    <property type="pathway name" value="Interleukin-1 signaling"/>
</dbReference>
<dbReference type="Reactome" id="R-HSA-933542">
    <property type="pathway name" value="TRAF6 mediated NF-kB activation"/>
</dbReference>
<dbReference type="Reactome" id="R-HSA-9692916">
    <property type="pathway name" value="SARS-CoV-1 activates/modulates innate immune responses"/>
</dbReference>
<dbReference type="Reactome" id="R-HSA-9860927">
    <property type="pathway name" value="Turbulent (oscillatory, disturbed) flow shear stress activates signaling by PIEZO1 and integrins in endothelial cells"/>
</dbReference>
<dbReference type="SABIO-RK" id="P25963"/>
<dbReference type="SignaLink" id="P25963"/>
<dbReference type="SIGNOR" id="P25963"/>
<dbReference type="BioGRID-ORCS" id="4792">
    <property type="hits" value="28 hits in 1172 CRISPR screens"/>
</dbReference>
<dbReference type="ChiTaRS" id="NFKBIA">
    <property type="organism name" value="human"/>
</dbReference>
<dbReference type="EvolutionaryTrace" id="P25963"/>
<dbReference type="GeneWiki" id="I%CE%BAB%CE%B1"/>
<dbReference type="GenomeRNAi" id="4792"/>
<dbReference type="Pharos" id="P25963">
    <property type="development level" value="Tchem"/>
</dbReference>
<dbReference type="PRO" id="PR:P25963"/>
<dbReference type="Proteomes" id="UP000005640">
    <property type="component" value="Chromosome 14"/>
</dbReference>
<dbReference type="RNAct" id="P25963">
    <property type="molecule type" value="protein"/>
</dbReference>
<dbReference type="Bgee" id="ENSG00000100906">
    <property type="expression patterns" value="Expressed in vena cava and 215 other cell types or tissues"/>
</dbReference>
<dbReference type="ExpressionAtlas" id="P25963">
    <property type="expression patterns" value="baseline and differential"/>
</dbReference>
<dbReference type="GO" id="GO:0005737">
    <property type="term" value="C:cytoplasm"/>
    <property type="evidence" value="ECO:0000314"/>
    <property type="project" value="UniProtKB"/>
</dbReference>
<dbReference type="GO" id="GO:0005829">
    <property type="term" value="C:cytosol"/>
    <property type="evidence" value="ECO:0000314"/>
    <property type="project" value="HPA"/>
</dbReference>
<dbReference type="GO" id="GO:0033256">
    <property type="term" value="C:I-kappaB/NF-kappaB complex"/>
    <property type="evidence" value="ECO:0000315"/>
    <property type="project" value="BHF-UCL"/>
</dbReference>
<dbReference type="GO" id="GO:0005654">
    <property type="term" value="C:nucleoplasm"/>
    <property type="evidence" value="ECO:0000304"/>
    <property type="project" value="Reactome"/>
</dbReference>
<dbReference type="GO" id="GO:0005634">
    <property type="term" value="C:nucleus"/>
    <property type="evidence" value="ECO:0000314"/>
    <property type="project" value="UniProtKB"/>
</dbReference>
<dbReference type="GO" id="GO:0005886">
    <property type="term" value="C:plasma membrane"/>
    <property type="evidence" value="ECO:0000314"/>
    <property type="project" value="HPA"/>
</dbReference>
<dbReference type="GO" id="GO:0019899">
    <property type="term" value="F:enzyme binding"/>
    <property type="evidence" value="ECO:0000353"/>
    <property type="project" value="UniProtKB"/>
</dbReference>
<dbReference type="GO" id="GO:0042802">
    <property type="term" value="F:identical protein binding"/>
    <property type="evidence" value="ECO:0000353"/>
    <property type="project" value="IntAct"/>
</dbReference>
<dbReference type="GO" id="GO:0051059">
    <property type="term" value="F:NF-kappaB binding"/>
    <property type="evidence" value="ECO:0000314"/>
    <property type="project" value="UniProtKB"/>
</dbReference>
<dbReference type="GO" id="GO:0008139">
    <property type="term" value="F:nuclear localization sequence binding"/>
    <property type="evidence" value="ECO:0000353"/>
    <property type="project" value="UniProtKB"/>
</dbReference>
<dbReference type="GO" id="GO:0140311">
    <property type="term" value="F:protein sequestering activity"/>
    <property type="evidence" value="ECO:0000314"/>
    <property type="project" value="UniProtKB"/>
</dbReference>
<dbReference type="GO" id="GO:0140416">
    <property type="term" value="F:transcription regulator inhibitor activity"/>
    <property type="evidence" value="ECO:0000315"/>
    <property type="project" value="BHF-UCL"/>
</dbReference>
<dbReference type="GO" id="GO:0031625">
    <property type="term" value="F:ubiquitin protein ligase binding"/>
    <property type="evidence" value="ECO:0000353"/>
    <property type="project" value="UniProtKB"/>
</dbReference>
<dbReference type="GO" id="GO:0050853">
    <property type="term" value="P:B cell receptor signaling pathway"/>
    <property type="evidence" value="ECO:0007669"/>
    <property type="project" value="Ensembl"/>
</dbReference>
<dbReference type="GO" id="GO:0007249">
    <property type="term" value="P:canonical NF-kappaB signal transduction"/>
    <property type="evidence" value="ECO:0000314"/>
    <property type="project" value="UniProt"/>
</dbReference>
<dbReference type="GO" id="GO:0070417">
    <property type="term" value="P:cellular response to cold"/>
    <property type="evidence" value="ECO:0000303"/>
    <property type="project" value="BHF-UCL"/>
</dbReference>
<dbReference type="GO" id="GO:0070498">
    <property type="term" value="P:interleukin-1-mediated signaling pathway"/>
    <property type="evidence" value="ECO:0000315"/>
    <property type="project" value="ARUK-UCL"/>
</dbReference>
<dbReference type="GO" id="GO:0031663">
    <property type="term" value="P:lipopolysaccharide-mediated signaling pathway"/>
    <property type="evidence" value="ECO:0007669"/>
    <property type="project" value="Ensembl"/>
</dbReference>
<dbReference type="GO" id="GO:0043124">
    <property type="term" value="P:negative regulation of canonical NF-kappaB signal transduction"/>
    <property type="evidence" value="ECO:0000314"/>
    <property type="project" value="UniProt"/>
</dbReference>
<dbReference type="GO" id="GO:0032375">
    <property type="term" value="P:negative regulation of cholesterol transport"/>
    <property type="evidence" value="ECO:0000315"/>
    <property type="project" value="BHF-UCL"/>
</dbReference>
<dbReference type="GO" id="GO:1900016">
    <property type="term" value="P:negative regulation of cytokine production involved in inflammatory response"/>
    <property type="evidence" value="ECO:0000314"/>
    <property type="project" value="UniProt"/>
</dbReference>
<dbReference type="GO" id="GO:0010888">
    <property type="term" value="P:negative regulation of lipid storage"/>
    <property type="evidence" value="ECO:0000315"/>
    <property type="project" value="BHF-UCL"/>
</dbReference>
<dbReference type="GO" id="GO:0010745">
    <property type="term" value="P:negative regulation of macrophage derived foam cell differentiation"/>
    <property type="evidence" value="ECO:0000315"/>
    <property type="project" value="BHF-UCL"/>
</dbReference>
<dbReference type="GO" id="GO:0045638">
    <property type="term" value="P:negative regulation of myeloid cell differentiation"/>
    <property type="evidence" value="ECO:0007669"/>
    <property type="project" value="Ensembl"/>
</dbReference>
<dbReference type="GO" id="GO:0032088">
    <property type="term" value="P:negative regulation of NF-kappaB transcription factor activity"/>
    <property type="evidence" value="ECO:0000314"/>
    <property type="project" value="MGI"/>
</dbReference>
<dbReference type="GO" id="GO:0045746">
    <property type="term" value="P:negative regulation of Notch signaling pathway"/>
    <property type="evidence" value="ECO:0007669"/>
    <property type="project" value="Ensembl"/>
</dbReference>
<dbReference type="GO" id="GO:0042308">
    <property type="term" value="P:negative regulation of protein import into nucleus"/>
    <property type="evidence" value="ECO:0000315"/>
    <property type="project" value="BHF-UCL"/>
</dbReference>
<dbReference type="GO" id="GO:0000122">
    <property type="term" value="P:negative regulation of transcription by RNA polymerase II"/>
    <property type="evidence" value="ECO:0000315"/>
    <property type="project" value="BHF-UCL"/>
</dbReference>
<dbReference type="GO" id="GO:0038061">
    <property type="term" value="P:non-canonical NF-kappaB signal transduction"/>
    <property type="evidence" value="ECO:0000314"/>
    <property type="project" value="UniProt"/>
</dbReference>
<dbReference type="GO" id="GO:0007219">
    <property type="term" value="P:Notch signaling pathway"/>
    <property type="evidence" value="ECO:0007669"/>
    <property type="project" value="Ensembl"/>
</dbReference>
<dbReference type="GO" id="GO:0070427">
    <property type="term" value="P:nucleotide-binding oligomerization domain containing 1 signaling pathway"/>
    <property type="evidence" value="ECO:0007669"/>
    <property type="project" value="Ensembl"/>
</dbReference>
<dbReference type="GO" id="GO:0070431">
    <property type="term" value="P:nucleotide-binding oligomerization domain containing 2 signaling pathway"/>
    <property type="evidence" value="ECO:0007669"/>
    <property type="project" value="Ensembl"/>
</dbReference>
<dbReference type="GO" id="GO:0050729">
    <property type="term" value="P:positive regulation of inflammatory response"/>
    <property type="evidence" value="ECO:0000314"/>
    <property type="project" value="CAFA"/>
</dbReference>
<dbReference type="GO" id="GO:0045944">
    <property type="term" value="P:positive regulation of transcription by RNA polymerase II"/>
    <property type="evidence" value="ECO:0000314"/>
    <property type="project" value="ARUK-UCL"/>
</dbReference>
<dbReference type="GO" id="GO:0060261">
    <property type="term" value="P:positive regulation of transcription initiation by RNA polymerase II"/>
    <property type="evidence" value="ECO:0007669"/>
    <property type="project" value="Ensembl"/>
</dbReference>
<dbReference type="GO" id="GO:0006606">
    <property type="term" value="P:protein import into nucleus"/>
    <property type="evidence" value="ECO:0007669"/>
    <property type="project" value="Ensembl"/>
</dbReference>
<dbReference type="GO" id="GO:0042127">
    <property type="term" value="P:regulation of cell population proliferation"/>
    <property type="evidence" value="ECO:0007669"/>
    <property type="project" value="Ensembl"/>
</dbReference>
<dbReference type="GO" id="GO:0043330">
    <property type="term" value="P:response to exogenous dsRNA"/>
    <property type="evidence" value="ECO:0007669"/>
    <property type="project" value="Ensembl"/>
</dbReference>
<dbReference type="GO" id="GO:0032495">
    <property type="term" value="P:response to muramyl dipeptide"/>
    <property type="evidence" value="ECO:0007669"/>
    <property type="project" value="Ensembl"/>
</dbReference>
<dbReference type="GO" id="GO:0035994">
    <property type="term" value="P:response to muscle stretch"/>
    <property type="evidence" value="ECO:0007669"/>
    <property type="project" value="Ensembl"/>
</dbReference>
<dbReference type="GO" id="GO:0023019">
    <property type="term" value="P:signal transduction involved in regulation of gene expression"/>
    <property type="evidence" value="ECO:0000314"/>
    <property type="project" value="UniProt"/>
</dbReference>
<dbReference type="GO" id="GO:0034142">
    <property type="term" value="P:toll-like receptor 4 signaling pathway"/>
    <property type="evidence" value="ECO:0000314"/>
    <property type="project" value="UniProt"/>
</dbReference>
<dbReference type="GO" id="GO:0033209">
    <property type="term" value="P:tumor necrosis factor-mediated signaling pathway"/>
    <property type="evidence" value="ECO:0000314"/>
    <property type="project" value="CAFA"/>
</dbReference>
<dbReference type="DisProt" id="DP00468"/>
<dbReference type="FunFam" id="1.25.40.20:FF:000124">
    <property type="entry name" value="NF-kappa-B inhibitor alpha isoform X2"/>
    <property type="match status" value="1"/>
</dbReference>
<dbReference type="Gene3D" id="1.25.40.20">
    <property type="entry name" value="Ankyrin repeat-containing domain"/>
    <property type="match status" value="1"/>
</dbReference>
<dbReference type="IDEAL" id="IID00654"/>
<dbReference type="InterPro" id="IPR002110">
    <property type="entry name" value="Ankyrin_rpt"/>
</dbReference>
<dbReference type="InterPro" id="IPR036770">
    <property type="entry name" value="Ankyrin_rpt-contain_sf"/>
</dbReference>
<dbReference type="InterPro" id="IPR051070">
    <property type="entry name" value="NF-kappa-B_inhibitor"/>
</dbReference>
<dbReference type="PANTHER" id="PTHR46680">
    <property type="entry name" value="NF-KAPPA-B INHIBITOR ALPHA"/>
    <property type="match status" value="1"/>
</dbReference>
<dbReference type="PANTHER" id="PTHR46680:SF1">
    <property type="entry name" value="NF-KAPPA-B INHIBITOR ALPHA"/>
    <property type="match status" value="1"/>
</dbReference>
<dbReference type="Pfam" id="PF12796">
    <property type="entry name" value="Ank_2"/>
    <property type="match status" value="1"/>
</dbReference>
<dbReference type="Pfam" id="PF13857">
    <property type="entry name" value="Ank_5"/>
    <property type="match status" value="1"/>
</dbReference>
<dbReference type="PRINTS" id="PR01415">
    <property type="entry name" value="ANKYRIN"/>
</dbReference>
<dbReference type="SMART" id="SM00248">
    <property type="entry name" value="ANK"/>
    <property type="match status" value="5"/>
</dbReference>
<dbReference type="SUPFAM" id="SSF48403">
    <property type="entry name" value="Ankyrin repeat"/>
    <property type="match status" value="1"/>
</dbReference>
<dbReference type="PROSITE" id="PS50297">
    <property type="entry name" value="ANK_REP_REGION"/>
    <property type="match status" value="1"/>
</dbReference>
<dbReference type="PROSITE" id="PS50088">
    <property type="entry name" value="ANK_REPEAT"/>
    <property type="match status" value="3"/>
</dbReference>
<proteinExistence type="evidence at protein level"/>
<gene>
    <name type="primary">NFKBIA</name>
    <name type="synonym">IKBA</name>
    <name type="synonym">MAD3</name>
    <name type="synonym">NFKBI</name>
</gene>
<protein>
    <recommendedName>
        <fullName>NF-kappa-B inhibitor alpha</fullName>
    </recommendedName>
    <alternativeName>
        <fullName>I-kappa-B-alpha</fullName>
        <shortName>IkB-alpha</shortName>
        <shortName>IkappaBalpha</shortName>
    </alternativeName>
    <alternativeName>
        <fullName>Major histocompatibility complex enhancer-binding protein MAD3</fullName>
    </alternativeName>
</protein>
<reference key="1">
    <citation type="journal article" date="1991" name="Cell">
        <title>Characterization of an immediate-early gene induced in adherent monocytes that encodes I kappa B-like activity.</title>
        <authorList>
            <person name="Haskill S."/>
            <person name="Beg A.A."/>
            <person name="Tompkins S.M."/>
            <person name="Morris J.S."/>
            <person name="Yurochko A.D."/>
            <person name="Sampson-Johannes A."/>
            <person name="Mondal K."/>
            <person name="Ralph P."/>
            <person name="Baldwin A.S. Jr."/>
        </authorList>
    </citation>
    <scope>NUCLEOTIDE SEQUENCE [MRNA]</scope>
    <scope>INDUCTION</scope>
    <source>
        <tissue>Monocyte</tissue>
    </source>
</reference>
<reference key="2">
    <citation type="journal article" date="2000" name="J. Exp. Med.">
        <title>Clonal deleterious mutations in the IkappaB alpha gene in the malignant cells in Hodgkin's lymphoma.</title>
        <authorList>
            <person name="Jungnickel B."/>
            <person name="Staratschek-Jox A."/>
            <person name="Braeuninger A."/>
            <person name="Spieker T."/>
            <person name="Wolf J."/>
            <person name="Diehl V."/>
            <person name="Hansmann M.-L."/>
            <person name="Rajewsky K."/>
            <person name="Kueppers R."/>
        </authorList>
    </citation>
    <scope>NUCLEOTIDE SEQUENCE [GENOMIC DNA]</scope>
    <source>
        <tissue>Lymph node</tissue>
    </source>
</reference>
<reference key="3">
    <citation type="submission" date="2001-04" db="EMBL/GenBank/DDBJ databases">
        <title>Homo sapiens IkBa mRNA.</title>
        <authorList>
            <person name="Liu B."/>
            <person name="Huang A."/>
        </authorList>
    </citation>
    <scope>NUCLEOTIDE SEQUENCE [MRNA]</scope>
</reference>
<reference key="4">
    <citation type="submission" date="2004-10" db="EMBL/GenBank/DDBJ databases">
        <title>Cloning of human full-length CDSs in BD Creator(TM) system donor vector.</title>
        <authorList>
            <person name="Kalnine N."/>
            <person name="Chen X."/>
            <person name="Rolfs A."/>
            <person name="Halleck A."/>
            <person name="Hines L."/>
            <person name="Eisenstein S."/>
            <person name="Koundinya M."/>
            <person name="Raphael J."/>
            <person name="Moreira D."/>
            <person name="Kelley T."/>
            <person name="LaBaer J."/>
            <person name="Lin Y."/>
            <person name="Phelan M."/>
            <person name="Farmer A."/>
        </authorList>
    </citation>
    <scope>NUCLEOTIDE SEQUENCE [LARGE SCALE MRNA]</scope>
</reference>
<reference key="5">
    <citation type="submission" date="2003-12" db="EMBL/GenBank/DDBJ databases">
        <authorList>
            <consortium name="SeattleSNPs variation discovery resource"/>
        </authorList>
    </citation>
    <scope>NUCLEOTIDE SEQUENCE [GENOMIC DNA]</scope>
</reference>
<reference key="6">
    <citation type="journal article" date="2004" name="Nat. Genet.">
        <title>Complete sequencing and characterization of 21,243 full-length human cDNAs.</title>
        <authorList>
            <person name="Ota T."/>
            <person name="Suzuki Y."/>
            <person name="Nishikawa T."/>
            <person name="Otsuki T."/>
            <person name="Sugiyama T."/>
            <person name="Irie R."/>
            <person name="Wakamatsu A."/>
            <person name="Hayashi K."/>
            <person name="Sato H."/>
            <person name="Nagai K."/>
            <person name="Kimura K."/>
            <person name="Makita H."/>
            <person name="Sekine M."/>
            <person name="Obayashi M."/>
            <person name="Nishi T."/>
            <person name="Shibahara T."/>
            <person name="Tanaka T."/>
            <person name="Ishii S."/>
            <person name="Yamamoto J."/>
            <person name="Saito K."/>
            <person name="Kawai Y."/>
            <person name="Isono Y."/>
            <person name="Nakamura Y."/>
            <person name="Nagahari K."/>
            <person name="Murakami K."/>
            <person name="Yasuda T."/>
            <person name="Iwayanagi T."/>
            <person name="Wagatsuma M."/>
            <person name="Shiratori A."/>
            <person name="Sudo H."/>
            <person name="Hosoiri T."/>
            <person name="Kaku Y."/>
            <person name="Kodaira H."/>
            <person name="Kondo H."/>
            <person name="Sugawara M."/>
            <person name="Takahashi M."/>
            <person name="Kanda K."/>
            <person name="Yokoi T."/>
            <person name="Furuya T."/>
            <person name="Kikkawa E."/>
            <person name="Omura Y."/>
            <person name="Abe K."/>
            <person name="Kamihara K."/>
            <person name="Katsuta N."/>
            <person name="Sato K."/>
            <person name="Tanikawa M."/>
            <person name="Yamazaki M."/>
            <person name="Ninomiya K."/>
            <person name="Ishibashi T."/>
            <person name="Yamashita H."/>
            <person name="Murakawa K."/>
            <person name="Fujimori K."/>
            <person name="Tanai H."/>
            <person name="Kimata M."/>
            <person name="Watanabe M."/>
            <person name="Hiraoka S."/>
            <person name="Chiba Y."/>
            <person name="Ishida S."/>
            <person name="Ono Y."/>
            <person name="Takiguchi S."/>
            <person name="Watanabe S."/>
            <person name="Yosida M."/>
            <person name="Hotuta T."/>
            <person name="Kusano J."/>
            <person name="Kanehori K."/>
            <person name="Takahashi-Fujii A."/>
            <person name="Hara H."/>
            <person name="Tanase T.-O."/>
            <person name="Nomura Y."/>
            <person name="Togiya S."/>
            <person name="Komai F."/>
            <person name="Hara R."/>
            <person name="Takeuchi K."/>
            <person name="Arita M."/>
            <person name="Imose N."/>
            <person name="Musashino K."/>
            <person name="Yuuki H."/>
            <person name="Oshima A."/>
            <person name="Sasaki N."/>
            <person name="Aotsuka S."/>
            <person name="Yoshikawa Y."/>
            <person name="Matsunawa H."/>
            <person name="Ichihara T."/>
            <person name="Shiohata N."/>
            <person name="Sano S."/>
            <person name="Moriya S."/>
            <person name="Momiyama H."/>
            <person name="Satoh N."/>
            <person name="Takami S."/>
            <person name="Terashima Y."/>
            <person name="Suzuki O."/>
            <person name="Nakagawa S."/>
            <person name="Senoh A."/>
            <person name="Mizoguchi H."/>
            <person name="Goto Y."/>
            <person name="Shimizu F."/>
            <person name="Wakebe H."/>
            <person name="Hishigaki H."/>
            <person name="Watanabe T."/>
            <person name="Sugiyama A."/>
            <person name="Takemoto M."/>
            <person name="Kawakami B."/>
            <person name="Yamazaki M."/>
            <person name="Watanabe K."/>
            <person name="Kumagai A."/>
            <person name="Itakura S."/>
            <person name="Fukuzumi Y."/>
            <person name="Fujimori Y."/>
            <person name="Komiyama M."/>
            <person name="Tashiro H."/>
            <person name="Tanigami A."/>
            <person name="Fujiwara T."/>
            <person name="Ono T."/>
            <person name="Yamada K."/>
            <person name="Fujii Y."/>
            <person name="Ozaki K."/>
            <person name="Hirao M."/>
            <person name="Ohmori Y."/>
            <person name="Kawabata A."/>
            <person name="Hikiji T."/>
            <person name="Kobatake N."/>
            <person name="Inagaki H."/>
            <person name="Ikema Y."/>
            <person name="Okamoto S."/>
            <person name="Okitani R."/>
            <person name="Kawakami T."/>
            <person name="Noguchi S."/>
            <person name="Itoh T."/>
            <person name="Shigeta K."/>
            <person name="Senba T."/>
            <person name="Matsumura K."/>
            <person name="Nakajima Y."/>
            <person name="Mizuno T."/>
            <person name="Morinaga M."/>
            <person name="Sasaki M."/>
            <person name="Togashi T."/>
            <person name="Oyama M."/>
            <person name="Hata H."/>
            <person name="Watanabe M."/>
            <person name="Komatsu T."/>
            <person name="Mizushima-Sugano J."/>
            <person name="Satoh T."/>
            <person name="Shirai Y."/>
            <person name="Takahashi Y."/>
            <person name="Nakagawa K."/>
            <person name="Okumura K."/>
            <person name="Nagase T."/>
            <person name="Nomura N."/>
            <person name="Kikuchi H."/>
            <person name="Masuho Y."/>
            <person name="Yamashita R."/>
            <person name="Nakai K."/>
            <person name="Yada T."/>
            <person name="Nakamura Y."/>
            <person name="Ohara O."/>
            <person name="Isogai T."/>
            <person name="Sugano S."/>
        </authorList>
    </citation>
    <scope>NUCLEOTIDE SEQUENCE [LARGE SCALE MRNA]</scope>
    <source>
        <tissue>Cerebellum</tissue>
    </source>
</reference>
<reference key="7">
    <citation type="journal article" date="2003" name="Nature">
        <title>The DNA sequence and analysis of human chromosome 14.</title>
        <authorList>
            <person name="Heilig R."/>
            <person name="Eckenberg R."/>
            <person name="Petit J.-L."/>
            <person name="Fonknechten N."/>
            <person name="Da Silva C."/>
            <person name="Cattolico L."/>
            <person name="Levy M."/>
            <person name="Barbe V."/>
            <person name="De Berardinis V."/>
            <person name="Ureta-Vidal A."/>
            <person name="Pelletier E."/>
            <person name="Vico V."/>
            <person name="Anthouard V."/>
            <person name="Rowen L."/>
            <person name="Madan A."/>
            <person name="Qin S."/>
            <person name="Sun H."/>
            <person name="Du H."/>
            <person name="Pepin K."/>
            <person name="Artiguenave F."/>
            <person name="Robert C."/>
            <person name="Cruaud C."/>
            <person name="Bruels T."/>
            <person name="Jaillon O."/>
            <person name="Friedlander L."/>
            <person name="Samson G."/>
            <person name="Brottier P."/>
            <person name="Cure S."/>
            <person name="Segurens B."/>
            <person name="Aniere F."/>
            <person name="Samain S."/>
            <person name="Crespeau H."/>
            <person name="Abbasi N."/>
            <person name="Aiach N."/>
            <person name="Boscus D."/>
            <person name="Dickhoff R."/>
            <person name="Dors M."/>
            <person name="Dubois I."/>
            <person name="Friedman C."/>
            <person name="Gouyvenoux M."/>
            <person name="James R."/>
            <person name="Madan A."/>
            <person name="Mairey-Estrada B."/>
            <person name="Mangenot S."/>
            <person name="Martins N."/>
            <person name="Menard M."/>
            <person name="Oztas S."/>
            <person name="Ratcliffe A."/>
            <person name="Shaffer T."/>
            <person name="Trask B."/>
            <person name="Vacherie B."/>
            <person name="Bellemere C."/>
            <person name="Belser C."/>
            <person name="Besnard-Gonnet M."/>
            <person name="Bartol-Mavel D."/>
            <person name="Boutard M."/>
            <person name="Briez-Silla S."/>
            <person name="Combette S."/>
            <person name="Dufosse-Laurent V."/>
            <person name="Ferron C."/>
            <person name="Lechaplais C."/>
            <person name="Louesse C."/>
            <person name="Muselet D."/>
            <person name="Magdelenat G."/>
            <person name="Pateau E."/>
            <person name="Petit E."/>
            <person name="Sirvain-Trukniewicz P."/>
            <person name="Trybou A."/>
            <person name="Vega-Czarny N."/>
            <person name="Bataille E."/>
            <person name="Bluet E."/>
            <person name="Bordelais I."/>
            <person name="Dubois M."/>
            <person name="Dumont C."/>
            <person name="Guerin T."/>
            <person name="Haffray S."/>
            <person name="Hammadi R."/>
            <person name="Muanga J."/>
            <person name="Pellouin V."/>
            <person name="Robert D."/>
            <person name="Wunderle E."/>
            <person name="Gauguet G."/>
            <person name="Roy A."/>
            <person name="Sainte-Marthe L."/>
            <person name="Verdier J."/>
            <person name="Verdier-Discala C."/>
            <person name="Hillier L.W."/>
            <person name="Fulton L."/>
            <person name="McPherson J."/>
            <person name="Matsuda F."/>
            <person name="Wilson R."/>
            <person name="Scarpelli C."/>
            <person name="Gyapay G."/>
            <person name="Wincker P."/>
            <person name="Saurin W."/>
            <person name="Quetier F."/>
            <person name="Waterston R."/>
            <person name="Hood L."/>
            <person name="Weissenbach J."/>
        </authorList>
    </citation>
    <scope>NUCLEOTIDE SEQUENCE [LARGE SCALE GENOMIC DNA]</scope>
</reference>
<reference key="8">
    <citation type="submission" date="2005-09" db="EMBL/GenBank/DDBJ databases">
        <authorList>
            <person name="Mural R.J."/>
            <person name="Istrail S."/>
            <person name="Sutton G.G."/>
            <person name="Florea L."/>
            <person name="Halpern A.L."/>
            <person name="Mobarry C.M."/>
            <person name="Lippert R."/>
            <person name="Walenz B."/>
            <person name="Shatkay H."/>
            <person name="Dew I."/>
            <person name="Miller J.R."/>
            <person name="Flanigan M.J."/>
            <person name="Edwards N.J."/>
            <person name="Bolanos R."/>
            <person name="Fasulo D."/>
            <person name="Halldorsson B.V."/>
            <person name="Hannenhalli S."/>
            <person name="Turner R."/>
            <person name="Yooseph S."/>
            <person name="Lu F."/>
            <person name="Nusskern D.R."/>
            <person name="Shue B.C."/>
            <person name="Zheng X.H."/>
            <person name="Zhong F."/>
            <person name="Delcher A.L."/>
            <person name="Huson D.H."/>
            <person name="Kravitz S.A."/>
            <person name="Mouchard L."/>
            <person name="Reinert K."/>
            <person name="Remington K.A."/>
            <person name="Clark A.G."/>
            <person name="Waterman M.S."/>
            <person name="Eichler E.E."/>
            <person name="Adams M.D."/>
            <person name="Hunkapiller M.W."/>
            <person name="Myers E.W."/>
            <person name="Venter J.C."/>
        </authorList>
    </citation>
    <scope>NUCLEOTIDE SEQUENCE [LARGE SCALE GENOMIC DNA]</scope>
</reference>
<reference key="9">
    <citation type="journal article" date="2004" name="Genome Res.">
        <title>The status, quality, and expansion of the NIH full-length cDNA project: the Mammalian Gene Collection (MGC).</title>
        <authorList>
            <consortium name="The MGC Project Team"/>
        </authorList>
    </citation>
    <scope>NUCLEOTIDE SEQUENCE [LARGE SCALE MRNA]</scope>
    <source>
        <tissue>Brain</tissue>
        <tissue>Kidney</tissue>
    </source>
</reference>
<reference key="10">
    <citation type="journal article" date="1992" name="Mol. Biol. Cell">
        <title>I kappa B/MAD-3 masks the nuclear localization signal of NF-kappa B p65 and requires the transactivation domain to inhibit NF-kappa B p65 DNA binding.</title>
        <authorList>
            <person name="Ganchi P.A."/>
            <person name="Sun S.C."/>
            <person name="Greene W.C."/>
            <person name="Ballard D.W."/>
        </authorList>
    </citation>
    <scope>FUNCTION</scope>
    <scope>INTERACTION WITH RELA</scope>
</reference>
<reference key="11">
    <citation type="journal article" date="1995" name="EMBO J.">
        <title>Phosphorylation of human I kappa B-alpha on serines 32 and 36 controls I kappa B-alpha proteolysis and NF-kappa B activation in response to diverse stimuli.</title>
        <authorList>
            <person name="Traenckner E.B."/>
            <person name="Pahl H.L."/>
            <person name="Henkel T."/>
            <person name="Schmidt K.N."/>
            <person name="Wilk S."/>
            <person name="Baeuerle P.A."/>
        </authorList>
    </citation>
    <scope>FUNCTION</scope>
    <scope>PHOSPHORYLATION AT SER-32 AND SER-36</scope>
    <scope>MUTAGENESIS OF SER-32 AND SER-36</scope>
</reference>
<reference key="12">
    <citation type="journal article" date="1995" name="Genes Dev.">
        <title>Signal-induced site-specific phosphorylation targets I kappa B alpha to the ubiquitin-proteasome pathway.</title>
        <authorList>
            <person name="Chen Z."/>
            <person name="Hagler J."/>
            <person name="Palombella V.J."/>
            <person name="Melandri F."/>
            <person name="Scherer D."/>
            <person name="Ballard D."/>
            <person name="Maniatis T."/>
        </authorList>
    </citation>
    <scope>FUNCTION</scope>
    <scope>UBIQUITINATION</scope>
    <scope>PHOSPHORYLATION AT SER-32 AND SER-36</scope>
    <scope>MUTAGENESIS OF SER-32 AND SER-36</scope>
</reference>
<reference key="13">
    <citation type="journal article" date="1995" name="Proc. Natl. Acad. Sci. U.S.A.">
        <title>Signal-induced degradation of IkappaB alpha requires site-specific ubiquitination.</title>
        <authorList>
            <person name="Scherer D.C."/>
            <person name="Brockman J.A."/>
            <person name="Chen Z."/>
            <person name="Maniatis T."/>
            <person name="Ballard D.W."/>
        </authorList>
    </citation>
    <scope>UBIQUITINATION AT LYS-21 AND LYS-22</scope>
    <scope>FUNCTION</scope>
    <scope>MUTAGENESIS OF LYS-21; LYS-22; LYS-38 AND LYS-47</scope>
</reference>
<reference key="14">
    <citation type="journal article" date="1995" name="Science">
        <title>Control of I kappa B-alpha proteolysis by site-specific, signal-induced phosphorylation.</title>
        <authorList>
            <person name="Brown K."/>
            <person name="Gerstberger S."/>
            <person name="Carlson L."/>
            <person name="Franzoso G."/>
            <person name="Siebenlist U."/>
        </authorList>
    </citation>
    <scope>FUNCTION</scope>
    <scope>PHOSPHORYLATION AT SER-32 AND SER-36</scope>
    <scope>MUTAGENESIS OF SER-32 AND SER-36</scope>
</reference>
<reference key="15">
    <citation type="journal article" date="1996" name="Cell">
        <title>Tyrosine phosphorylation of IkappaB-alpha activates NF-kappaB without proteolytic degradation of IkappaB-alpha.</title>
        <authorList>
            <person name="Imbert V."/>
            <person name="Rupec R.A."/>
            <person name="Livolsi A."/>
            <person name="Pahl H.L."/>
            <person name="Traenckner E.B.-M."/>
            <person name="Mueller-Dieckmann C."/>
            <person name="Farahifar D."/>
            <person name="Rossi B."/>
            <person name="Auberger P."/>
            <person name="Baeuerle P.A."/>
            <person name="Peyron J.-F."/>
        </authorList>
    </citation>
    <scope>PHOSPHORYLATION AT TYR-42</scope>
    <scope>MUTAGENESIS OF TYR-42</scope>
</reference>
<reference key="16">
    <citation type="journal article" date="1996" name="J. Biol. Chem.">
        <title>Role of IkappaBalpha ubiquitination in signal-induced activation of NFkappaB in vivo.</title>
        <authorList>
            <person name="Roff M."/>
            <person name="Thompson J."/>
            <person name="Rodriguez M.S."/>
            <person name="Jacque J.M."/>
            <person name="Baleux F."/>
            <person name="Arenzana-Seisdedos F."/>
            <person name="Hay R.T."/>
        </authorList>
    </citation>
    <scope>UBIQUITINATION</scope>
    <scope>PHOSPHORYLATION AT SER-32 AND SER-36</scope>
    <scope>MUTAGENESIS OF SER-32 AND SER-36</scope>
</reference>
<reference key="17">
    <citation type="journal article" date="1996" name="J. Biol. Chem.">
        <title>Site-specific tyrosine phosphorylation of IkappaBalpha negatively regulates its inducible phosphorylation and degradation.</title>
        <authorList>
            <person name="Singh S."/>
            <person name="Darnay B.G."/>
            <person name="Aggarwal B.B."/>
        </authorList>
    </citation>
    <scope>PHOSPHORYLATION AT TYR-42</scope>
</reference>
<reference key="18">
    <citation type="journal article" date="1996" name="Mol. Cell. Biol.">
        <title>Casein kinase II phosphorylates I kappa B alpha at S-283, S-289, S-293, and T-291 and is required for its degradation.</title>
        <authorList>
            <person name="McElhinny J.A."/>
            <person name="Trushin S.A."/>
            <person name="Bren G.D."/>
            <person name="Chester N."/>
            <person name="Paya C.V."/>
        </authorList>
    </citation>
    <scope>PHOSPHORYLATION AT SER-283; SER-288; SER-293 AND THR-291</scope>
</reference>
<reference key="19">
    <citation type="journal article" date="1996" name="Mol. Cell. Biol.">
        <title>Mapping of the inducible IkappaB phosphorylation sites that signal its ubiquitination and degradation.</title>
        <authorList>
            <person name="DiDonato J.A."/>
            <person name="Mercurio F."/>
            <person name="Rosette C."/>
            <person name="Wu-Li J."/>
            <person name="Suyang H."/>
            <person name="Ghosh S."/>
            <person name="Karin M."/>
        </authorList>
    </citation>
    <scope>MUTAGENESIS OF LYS-21; LYS-22; ASP-31; SER-32; ASP-35; SER-36; SER-234; SER-262 AND THR-263</scope>
</reference>
<reference key="20">
    <citation type="journal article" date="1996" name="Mol. Cell. Biol.">
        <title>Phosphorylation of IkappaBalpha in the C-terminal PEST domain by casein kinase II affects intrinsic protein stability.</title>
        <authorList>
            <person name="Lin R."/>
            <person name="Beauparlant P."/>
            <person name="Makris C."/>
            <person name="Meloche S."/>
            <person name="Hiscott J."/>
        </authorList>
    </citation>
    <scope>PHOSPHORYLATION AT THR-291; SER-283 AND THR-299</scope>
</reference>
<reference key="21">
    <citation type="journal article" date="1998" name="Mol. Cell. Biol.">
        <title>Nuclear localization of IkappaB alpha is mediated by the second ankyrin repeat: the IkappaB alpha ankyrin repeats define a novel class of cis-acting nuclear import sequences.</title>
        <authorList>
            <person name="Sachdev S."/>
            <person name="Hoffmann A."/>
            <person name="Hannink M."/>
        </authorList>
    </citation>
    <scope>SUBCELLULAR LOCATION</scope>
    <scope>NUCLEAR LOCALIZATION SIGNAL</scope>
    <scope>MUTAGENESIS OF 115-LEU--ILE-120</scope>
</reference>
<reference key="22">
    <citation type="journal article" date="1998" name="Nature">
        <title>IKAP is a scaffold protein of the IkappaB kinase complex.</title>
        <authorList>
            <person name="Cohen L."/>
            <person name="Henzel W.J."/>
            <person name="Baeuerle P.A."/>
        </authorList>
    </citation>
    <scope>IDENTIFICATION IN A COMPLEX WITH CHUK; IKBKB; RELA; ELP1 AND MAP3K14</scope>
</reference>
<reference key="23">
    <citation type="journal article" date="1998" name="Nat. Med.">
        <title>A minimal glycine-alanine repeat prevents the interaction of ubiquitinated I kappaB alpha with the proteasome: a new mechanism for selective inhibition of proteolysis.</title>
        <authorList>
            <person name="Sharipo A."/>
            <person name="Imreh M."/>
            <person name="Leonchiks A."/>
            <person name="Imreh S."/>
            <person name="Masucci M.G."/>
        </authorList>
    </citation>
    <scope>UBIQUITINATION</scope>
    <scope>PHOSPHORYLATION AT SER-32 AND SER-36</scope>
</reference>
<reference key="24">
    <citation type="journal article" date="1999" name="FEBS Lett.">
        <title>A complex containing betaTrCP recruits Cdc34 to catalyse ubiquitination of IkappaBalpha.</title>
        <authorList>
            <person name="Vuillard L."/>
            <person name="Nicholson J."/>
            <person name="Hay R.T."/>
        </authorList>
    </citation>
    <scope>UBIQUITINATION BY THE SCF(FBXW11) COMPLEX</scope>
</reference>
<reference key="25">
    <citation type="journal article" date="1999" name="J. Biol. Chem.">
        <title>Identification of the ubiquitin carrier proteins, E2s, involved in signal-induced conjugation and subsequent degradation of IkappaBalpha.</title>
        <authorList>
            <person name="Gonen H."/>
            <person name="Bercovich B."/>
            <person name="Orian A."/>
            <person name="Carrano A."/>
            <person name="Takizawa C."/>
            <person name="Yamanaka K."/>
            <person name="Pagano M."/>
            <person name="Iwai K."/>
            <person name="Ciechanover A."/>
        </authorList>
    </citation>
    <scope>PHOSPHORYLATION AT SER-32 AND SER-36</scope>
    <scope>MUTAGENESIS OF SER-32 AND SER-36</scope>
    <scope>UBIQUITINATION BY UBE2D2 AND UBE2D3</scope>
</reference>
<reference key="26">
    <citation type="journal article" date="1999" name="J. Biol. Chem.">
        <title>Immunosuppressant FK506 activates NF-kappaB through the proteasome-mediated degradation of IkappaBalpha. Requirement for Ikappabalpha n-terminal phosphorylation but not ubiquitination sites.</title>
        <authorList>
            <person name="Zhang Y."/>
            <person name="Sun X."/>
            <person name="Muraoka K."/>
            <person name="Ikeda A."/>
            <person name="Miyamoto S."/>
            <person name="Shimizu H."/>
            <person name="Yoshioka K."/>
            <person name="Yamamoto K."/>
        </authorList>
    </citation>
    <scope>PHOSPHORYLATION AT SER-32</scope>
    <scope>UBIQUITINATION AT LYS-21 AND LYS-22</scope>
    <scope>MUTAGENESIS OF LYS-21; LYS-22; SER-32 AND SER-36</scope>
</reference>
<reference key="27">
    <citation type="journal article" date="1999" name="Mol. Cell. Biol.">
        <title>Direct association and nuclear import of the hepatitis B virus X protein with the NF-kappaB inhibitor IkappaBalpha.</title>
        <authorList>
            <person name="Weil R."/>
            <person name="Sirma H."/>
            <person name="Giannini C."/>
            <person name="Kremsdorf D."/>
            <person name="Bessia C."/>
            <person name="Dargemont C."/>
            <person name="Brechot C."/>
            <person name="Israel A."/>
        </authorList>
    </citation>
    <scope>INTERACTION WITH HEPATITIS B VIRUS/HBV PROTEIN X (MICROBIAL INFECTION)</scope>
</reference>
<reference key="28">
    <citation type="journal article" date="2000" name="J. Biol. Chem.">
        <title>Homodimer of two F-box proteins betaTrCP1 or betaTrCP2 binds to IkappaBalpha for signal-dependent ubiquitination.</title>
        <authorList>
            <person name="Suzuki H."/>
            <person name="Chiba T."/>
            <person name="Suzuki T."/>
            <person name="Fujita T."/>
            <person name="Ikenoue T."/>
            <person name="Omata M."/>
            <person name="Furuichi K."/>
            <person name="Shikama H."/>
            <person name="Tanaka K."/>
        </authorList>
    </citation>
    <scope>UBIQUITINATION BY THE SCF(BTRC)</scope>
</reference>
<reference key="29">
    <citation type="journal article" date="2000" name="Mol. Cell">
        <title>IKK epsilon is part of a novel PMA-inducible IkappaB kinase complex.</title>
        <authorList>
            <person name="Peters R.T."/>
            <person name="Liao S.-M."/>
            <person name="Maniatis T."/>
        </authorList>
    </citation>
    <scope>PHOSPHORYLATION AT SER-32 AND SER-36</scope>
</reference>
<reference key="30">
    <citation type="journal article" date="2000" name="Nature">
        <title>NAK is an IkappaB kinase-activating kinase.</title>
        <authorList>
            <person name="Tojima Y."/>
            <person name="Fujimoto A."/>
            <person name="Delhase M."/>
            <person name="Chen Y."/>
            <person name="Hatakeyama S."/>
            <person name="Nakayama K."/>
            <person name="Kaneko Y."/>
            <person name="Nimura Y."/>
            <person name="Motoyama N."/>
            <person name="Ikeda K."/>
            <person name="Karin M."/>
            <person name="Nakanishi M."/>
        </authorList>
    </citation>
    <scope>PHOSPHORYLATION BY TBK1</scope>
</reference>
<reference key="31">
    <citation type="journal article" date="2000" name="Science">
        <title>A subclass of Ras proteins that regulate the degradation of IkappaB.</title>
        <authorList>
            <person name="Fenwick C."/>
            <person name="Na S.-Y."/>
            <person name="Voll R.E."/>
            <person name="Zhong H."/>
            <person name="Im S.-Y."/>
            <person name="Lee J.W."/>
            <person name="Ghosh S."/>
        </authorList>
    </citation>
    <scope>INTERACTION WITH NKIRAS1 AND NKIRAS2</scope>
</reference>
<reference key="32">
    <citation type="journal article" date="2000" name="Proc. Natl. Acad. Sci. U.S.A.">
        <title>A nuclear export signal in the N-terminal regulatory domain of IkappaBalpha controls cytoplasmic localization of inactive NF-kappaB/IkappaBalpha complexes.</title>
        <authorList>
            <person name="Huang T.T."/>
            <person name="Kudo N."/>
            <person name="Yoshida M."/>
            <person name="Miyamoto S."/>
        </authorList>
    </citation>
    <scope>SUBCELLULAR LOCATION</scope>
    <scope>NUCLEAR EXPORT SIGNAL</scope>
    <scope>MUTAGENESIS OF 45-MET--ILE-52</scope>
</reference>
<reference key="33">
    <citation type="journal article" date="2001" name="J. Biol. Chem.">
        <title>SUMO-1 conjugation in vivo requires both a consensus modification motif and nuclear targeting.</title>
        <authorList>
            <person name="Rodriguez M.S."/>
            <person name="Dargemont C."/>
            <person name="Hay R.T."/>
        </authorList>
    </citation>
    <scope>SUMOYLATION AT LYS-21</scope>
    <scope>SUBCELLULAR LOCATION</scope>
    <scope>MUTAGENESIS OF LYS-21 AND LYS-22</scope>
</reference>
<reference key="34">
    <citation type="journal article" date="2010" name="J. Biol. Chem.">
        <title>Thrombin and collagen induce a feedback inhibitory signaling pathway in platelets involving dissociation of the catalytic subunit of protein kinase A from an NFkappaB-IkappaB complex.</title>
        <authorList>
            <person name="Gambaryan S."/>
            <person name="Kobsar A."/>
            <person name="Rukoyatkina N."/>
            <person name="Herterich S."/>
            <person name="Geiger J."/>
            <person name="Smolenski A."/>
            <person name="Lohmann S.M."/>
            <person name="Walter U."/>
        </authorList>
    </citation>
    <scope>INTERACTION WITH PRKACA</scope>
</reference>
<reference key="35">
    <citation type="journal article" date="2006" name="Mol. Cell. Biol.">
        <title>Protein methyltransferase 2 inhibits NF-kappaB function and promotes apoptosis.</title>
        <authorList>
            <person name="Ganesh L."/>
            <person name="Yoshimoto T."/>
            <person name="Moorthy N.C."/>
            <person name="Akahata W."/>
            <person name="Boehm M."/>
            <person name="Nabel E.G."/>
            <person name="Nabel G.J."/>
        </authorList>
    </citation>
    <scope>INTERACTION WITH PRMT2</scope>
    <scope>SUBCELLULAR LOCATION</scope>
</reference>
<reference key="36">
    <citation type="journal article" date="2006" name="Proc. Natl. Acad. Sci. U.S.A.">
        <title>Posttranslational hydroxylation of ankyrin repeats in IkappaB proteins by the hypoxia-inducible factor (HIF) asparaginyl hydroxylase, factor inhibiting HIF (FIH).</title>
        <authorList>
            <person name="Cockman M.E."/>
            <person name="Lancaster D.E."/>
            <person name="Stolze I.P."/>
            <person name="Hewitson K.S."/>
            <person name="McDonough M.A."/>
            <person name="Coleman M.L."/>
            <person name="Coles C.H."/>
            <person name="Yu X."/>
            <person name="Hay R.T."/>
            <person name="Ley S.C."/>
            <person name="Pugh C.W."/>
            <person name="Oldham N.J."/>
            <person name="Masson N."/>
            <person name="Schofield C.J."/>
            <person name="Ratcliffe P.J."/>
        </authorList>
    </citation>
    <scope>HYDROXYLATION AT ASN-210 AND ASN-244</scope>
    <scope>MUTAGENESIS OF ASN-210 AND ASN-244</scope>
</reference>
<reference key="37">
    <citation type="journal article" date="2007" name="Cell">
        <title>RSUME, a small RWD-containing protein, enhances SUMO conjugation and stabilizes HIF-1alpha during hypoxia.</title>
        <authorList>
            <person name="Carbia-Nagashima A."/>
            <person name="Gerez J."/>
            <person name="Perez-Castro C."/>
            <person name="Paez-Pereda M."/>
            <person name="Silberstein S."/>
            <person name="Stalla G.K."/>
            <person name="Holsboer F."/>
            <person name="Arzt E."/>
        </authorList>
    </citation>
    <scope>INTERACTION WITH RWDD3</scope>
    <scope>SUMOYLATION</scope>
    <scope>MUTAGENESIS OF LYS-21 AND LYS-22</scope>
</reference>
<reference key="38">
    <citation type="journal article" date="2008" name="Blood">
        <title>The familial Mediterranean fever protein, pyrin, is cleaved by caspase-1 and activates NF-kappaB through its N-terminal fragment.</title>
        <authorList>
            <person name="Chae J.J."/>
            <person name="Wood G."/>
            <person name="Richard K."/>
            <person name="Jaffe H."/>
            <person name="Colburn N.T."/>
            <person name="Masters S.L."/>
            <person name="Gumucio D.L."/>
            <person name="Shoham N.G."/>
            <person name="Kastner D.L."/>
        </authorList>
    </citation>
    <scope>INTERACTION WITH MEFV</scope>
</reference>
<reference key="39">
    <citation type="journal article" date="2010" name="Mol. Cell">
        <title>Priming and extending: a UbcH5/Cdc34 E2 handoff mechanism for polyubiquitination on a SCF substrate.</title>
        <authorList>
            <person name="Wu K."/>
            <person name="Kovacev J."/>
            <person name="Pan Z.Q."/>
        </authorList>
    </citation>
    <scope>UBIQUITINATION AT LYS-21 AND LYS-22</scope>
</reference>
<reference key="40">
    <citation type="journal article" date="2010" name="J. Virol.">
        <title>The cysteine protease domain of porcine reproductive and respiratory syndrome virus nonstructural protein 2 possesses deubiquitinating and interferon antagonism functions.</title>
        <authorList>
            <person name="Sun Z."/>
            <person name="Chen Z."/>
            <person name="Lawson S.R."/>
            <person name="Fang Y."/>
        </authorList>
    </citation>
    <scope>DEUBIQUITINATION BY PORCINE REPRODUCTIVE AND RESPIRATORY SYNDROME VIRUS NSP2 PROTEIN</scope>
</reference>
<reference key="41">
    <citation type="journal article" date="2013" name="PLoS ONE">
        <title>In silico structural and functional characterization of the RSUME splice variants.</title>
        <authorList>
            <person name="Gerez J."/>
            <person name="Fuertes M."/>
            <person name="Tedesco L."/>
            <person name="Silberstein S."/>
            <person name="Sevlever G."/>
            <person name="Paez-Pereda M."/>
            <person name="Holsboer F."/>
            <person name="Turjanski A.G."/>
            <person name="Arzt E."/>
        </authorList>
    </citation>
    <scope>INTERACTION WITH RWDD3</scope>
</reference>
<reference key="42">
    <citation type="journal article" date="2013" name="PLoS ONE">
        <title>DDRGK1 regulates NF-kappaB activity by modulating IkappaBalpha stability.</title>
        <authorList>
            <person name="Xi P."/>
            <person name="Ding D."/>
            <person name="Zhou J."/>
            <person name="Wang M."/>
            <person name="Cong Y.S."/>
        </authorList>
    </citation>
    <scope>INTERACTION WITH DDRGK1</scope>
</reference>
<reference key="43">
    <citation type="journal article" date="2023" name="Elife">
        <title>FAM76B regulates NF-kappaB-mediated inflammatory pathway by influencing the translocation of hnRNPA2B1.</title>
        <authorList>
            <person name="Wang D."/>
            <person name="Zheng X."/>
            <person name="Chai L."/>
            <person name="Zhao J."/>
            <person name="Zhu J."/>
            <person name="Li Y."/>
            <person name="Yang P."/>
            <person name="Mao Q."/>
            <person name="Xia H."/>
        </authorList>
    </citation>
    <scope>INTERACTION WITH HNRNPA2B1</scope>
</reference>
<reference key="44">
    <citation type="journal article" date="2023" name="J. Immunol.">
        <title>USP39 Regulates NF-kappaB-Mediated Inflammatory Responses through Deubiquitinating K48-Linked IkappaBalpha.</title>
        <authorList>
            <person name="Quan J."/>
            <person name="Zhao X."/>
            <person name="Xiao Y."/>
            <person name="Wu H."/>
            <person name="Di Q."/>
            <person name="Wu Z."/>
            <person name="Chen X."/>
            <person name="Tang H."/>
            <person name="Zhao J."/>
            <person name="Guan Y."/>
            <person name="Xu Y."/>
            <person name="Chen W."/>
        </authorList>
    </citation>
    <scope>FUNCTION</scope>
    <scope>DEUBIQUITINATION BY USP39</scope>
</reference>
<reference key="45">
    <citation type="journal article" date="1998" name="Cell">
        <title>Structure of an IkappaBalpha/NF-kappaB complex.</title>
        <authorList>
            <person name="Jacobs M.D."/>
            <person name="Harrison S.C."/>
        </authorList>
    </citation>
    <scope>X-RAY CRYSTALLOGRAPHY (2.7 ANGSTROMS) OF 70-282</scope>
</reference>
<reference key="46">
    <citation type="journal article" date="1998" name="Cell">
        <title>The crystal structure of the IkappaBalpha/NF-kappaB complex reveals mechanisms of NF-kappaB inactivation.</title>
        <authorList>
            <person name="Huxford T."/>
            <person name="Huang D.B."/>
            <person name="Malek S."/>
            <person name="Ghosh G."/>
        </authorList>
    </citation>
    <scope>X-RAY CRYSTALLOGRAPHY (2.3 ANGSTROMS) OF 73-302</scope>
</reference>
<reference key="47">
    <citation type="journal article" date="2003" name="J. Clin. Invest.">
        <title>A hypermorphic IkappaBalpha mutation is associated with autosomal dominant anhidrotic ectodermal dysplasia and T cell immunodeficiency.</title>
        <authorList>
            <person name="Courtois G."/>
            <person name="Smahi A."/>
            <person name="Reichenbach J."/>
            <person name="Doffinger R."/>
            <person name="Cancrini C."/>
            <person name="Bonnet M."/>
            <person name="Puel A."/>
            <person name="Chable-Bessia C."/>
            <person name="Yamaoka S."/>
            <person name="Feinberg J."/>
            <person name="Dupuis-Girod S."/>
            <person name="Bodemer C."/>
            <person name="Livadiotti S."/>
            <person name="Novelli F."/>
            <person name="Rossi P."/>
            <person name="Fischer A."/>
            <person name="Israel A."/>
            <person name="Munnich A."/>
            <person name="Le Deist F."/>
            <person name="Casanova J.L."/>
        </authorList>
    </citation>
    <scope>VARIANT EDAID2 ILE-32</scope>
</reference>
<reference key="48">
    <citation type="journal article" date="2008" name="Hum. Mutat.">
        <title>A novel mutation in NFKBIA/IKBA results in a degradation-resistant N-truncated protein and is associated with ectodermal dysplasia with immunodeficiency.</title>
        <authorList>
            <person name="Lopez-Granados E."/>
            <person name="Keenan J.E."/>
            <person name="Kinney M.C."/>
            <person name="Leo H."/>
            <person name="Jain N."/>
            <person name="Ma C.A."/>
            <person name="Quinones R."/>
            <person name="Gelfand E.W."/>
            <person name="Jain A."/>
        </authorList>
    </citation>
    <scope>INVOLVEMENT IN EDAID2</scope>
</reference>
<keyword id="KW-0002">3D-structure</keyword>
<keyword id="KW-0040">ANK repeat</keyword>
<keyword id="KW-0963">Cytoplasm</keyword>
<keyword id="KW-0225">Disease variant</keyword>
<keyword id="KW-0038">Ectodermal dysplasia</keyword>
<keyword id="KW-0945">Host-virus interaction</keyword>
<keyword id="KW-0379">Hydroxylation</keyword>
<keyword id="KW-1017">Isopeptide bond</keyword>
<keyword id="KW-0539">Nucleus</keyword>
<keyword id="KW-0597">Phosphoprotein</keyword>
<keyword id="KW-1267">Proteomics identification</keyword>
<keyword id="KW-1185">Reference proteome</keyword>
<keyword id="KW-0677">Repeat</keyword>
<keyword id="KW-0832">Ubl conjugation</keyword>
<sequence>MFQAAERPQEWAMEGPRDGLKKERLLDDRHDSGLDSMKDEEYEQMVKELQEIRLEPQEVPRGSEPWKQQLTEDGDSFLHLAIIHEEKALTMEVIRQVKGDLAFLNFQNNLQQTPLHLAVITNQPEIAEALLGAGCDPELRDFRGNTPLHLACEQGCLASVGVLTQSCTTPHLHSILKATNYNGHTCLHLASIHGYLGIVELLVSLGADVNAQEPCNGRTALHLAVDLQNPDLVSLLLKCGADVNRVTYQGYSPYQLTWGRPSTRIQQQLGQLTLENLQMLPESEDEESYDTESEFTEFTEDELPYDDCVFGGQRLTL</sequence>
<feature type="chain" id="PRO_0000066999" description="NF-kappa-B inhibitor alpha">
    <location>
        <begin position="1"/>
        <end position="317"/>
    </location>
</feature>
<feature type="repeat" description="ANK 1">
    <location>
        <begin position="73"/>
        <end position="103"/>
    </location>
</feature>
<feature type="repeat" description="ANK 2">
    <location>
        <begin position="110"/>
        <end position="139"/>
    </location>
</feature>
<feature type="repeat" description="ANK 3">
    <location>
        <begin position="143"/>
        <end position="172"/>
    </location>
</feature>
<feature type="repeat" description="ANK 4">
    <location>
        <begin position="182"/>
        <end position="211"/>
    </location>
</feature>
<feature type="repeat" description="ANK 5">
    <location>
        <begin position="216"/>
        <end position="245"/>
    </location>
</feature>
<feature type="region of interest" description="Disordered" evidence="1">
    <location>
        <begin position="1"/>
        <end position="39"/>
    </location>
</feature>
<feature type="short sequence motif" description="Destruction motif" evidence="32">
    <location>
        <begin position="30"/>
        <end position="36"/>
    </location>
</feature>
<feature type="short sequence motif" description="Nuclear export signal" evidence="7">
    <location>
        <begin position="45"/>
        <end position="54"/>
    </location>
</feature>
<feature type="short sequence motif" description="Nuclear import signal" evidence="36">
    <location>
        <begin position="110"/>
        <end position="120"/>
    </location>
</feature>
<feature type="compositionally biased region" description="Basic and acidic residues" evidence="1">
    <location>
        <begin position="15"/>
        <end position="39"/>
    </location>
</feature>
<feature type="modified residue" description="Phosphoserine; by IKKA and IKKE" evidence="2 5 9 27 28 29 31">
    <location>
        <position position="32"/>
    </location>
</feature>
<feature type="modified residue" description="Phosphoserine; by IKKA, IKKB, IKKE and TBK1" evidence="2 9 27 28 29 31">
    <location>
        <position position="36"/>
    </location>
</feature>
<feature type="modified residue" description="Phosphotyrosine; by Tyr-kinases" evidence="34 35">
    <location>
        <position position="42"/>
    </location>
</feature>
<feature type="modified residue" description="(3S)-3-hydroxyasparagine; by HIF1AN; partial" evidence="14">
    <location>
        <position position="210"/>
    </location>
</feature>
<feature type="modified residue" description="(3S)-3-hydroxyasparagine; by HIF1AN; partial" evidence="14">
    <location>
        <position position="244"/>
    </location>
</feature>
<feature type="modified residue" description="Phosphoserine; by CK2" evidence="30 33">
    <location>
        <position position="283"/>
    </location>
</feature>
<feature type="modified residue" description="Phosphoserine; by CK2" evidence="30">
    <location>
        <position position="288"/>
    </location>
</feature>
<feature type="modified residue" description="Phosphothreonine; by CK2" evidence="30 33">
    <location>
        <position position="291"/>
    </location>
</feature>
<feature type="modified residue" description="Phosphoserine; by CK2" evidence="30">
    <location>
        <position position="293"/>
    </location>
</feature>
<feature type="modified residue" description="Phosphothreonine; by CK2" evidence="33">
    <location>
        <position position="299"/>
    </location>
</feature>
<feature type="cross-link" description="Glycyl lysine isopeptide (Lys-Gly) (interchain with G-Cter in SUMO); alternate" evidence="10">
    <location>
        <position position="21"/>
    </location>
</feature>
<feature type="cross-link" description="Glycyl lysine isopeptide (Lys-Gly) (interchain with G-Cter in ubiquitin); alternate" evidence="5 19 26">
    <location>
        <position position="21"/>
    </location>
</feature>
<feature type="cross-link" description="Glycyl lysine isopeptide (Lys-Gly) (interchain with G-Cter in ubiquitin)" evidence="5 19 26">
    <location>
        <position position="22"/>
    </location>
</feature>
<feature type="sequence variant" id="VAR_034871" description="In EDAID2; dbSNP:rs28933100." evidence="11">
    <original>S</original>
    <variation>I</variation>
    <location>
        <position position="32"/>
    </location>
</feature>
<feature type="mutagenesis site" description="Little change in Tax-stimulated transactivation. No sumoylation. Greatly reduced Tax- or cytokine-stimulated transactivation and decrease in ubiquitination and degradation; when associated with R-22. Does not affect activation by FK506." evidence="10 15 26 32">
    <original>K</original>
    <variation>R</variation>
    <location>
        <position position="21"/>
    </location>
</feature>
<feature type="mutagenesis site" description="Little change in Tax-stimulated transactivation. No sumoylation. Greatly reduced Tax- or cytokine-stimulated transactivation and decrease in ubiquitination and degradation; when associated with R-21. Does not affect activation by FK506." evidence="10 15 26 32">
    <original>K</original>
    <variation>R</variation>
    <location>
        <position position="22"/>
    </location>
</feature>
<feature type="mutagenesis site" description="Loss of phosphorylation; when associated with A-35." evidence="32">
    <original>D</original>
    <variation>A</variation>
    <location>
        <position position="31"/>
    </location>
</feature>
<feature type="mutagenesis site" description="Loss of phosphorylation, ubiquitination and degradation; when associated with A-36. Abolished activation by FK506." evidence="2 5 27 28 29 31 32">
    <original>S</original>
    <variation>A</variation>
    <location>
        <position position="32"/>
    </location>
</feature>
<feature type="mutagenesis site" description="Mimics phosphorylation; promoting ubiquitination and degradation; when associated with E-36." evidence="27 28">
    <original>S</original>
    <variation>E</variation>
    <location>
        <position position="32"/>
    </location>
</feature>
<feature type="mutagenesis site" description="Decrease in phosphorylation and degradation; when associated with T-36." evidence="2 32">
    <original>S</original>
    <variation>T</variation>
    <location>
        <position position="32"/>
    </location>
</feature>
<feature type="mutagenesis site" description="Loss in phosphorylation; when associated with A-31." evidence="32">
    <original>D</original>
    <variation>A</variation>
    <location>
        <position position="35"/>
    </location>
</feature>
<feature type="mutagenesis site" description="No change neither in phosphorylation, nor on degradation." evidence="32">
    <original>D</original>
    <variation>G</variation>
    <location>
        <position position="35"/>
    </location>
</feature>
<feature type="mutagenesis site" description="Loss of phosphorylation, ubiquitination, and degradation; when associated with A-32. Does not affect activation by FK506." evidence="2 27 28 29 31 32">
    <original>S</original>
    <variation>A</variation>
    <location>
        <position position="36"/>
    </location>
</feature>
<feature type="mutagenesis site" description="Mimics phosphorylation; promoting ubiquitination and degradation; when associated with E-32." evidence="27 28">
    <original>S</original>
    <variation>E</variation>
    <location>
        <position position="36"/>
    </location>
</feature>
<feature type="mutagenesis site" description="Decrease in phosphorylation and degradation; when associated with T-32." evidence="2 32">
    <original>S</original>
    <variation>T</variation>
    <location>
        <position position="36"/>
    </location>
</feature>
<feature type="mutagenesis site" description="No change in Tax-stimulated transactivation. No change in Tax-stimulated transactivation; when associated with R-47." evidence="26">
    <original>K</original>
    <variation>R</variation>
    <location>
        <position position="38"/>
    </location>
</feature>
<feature type="mutagenesis site" description="No phosphorylation." evidence="34">
    <original>Y</original>
    <variation>F</variation>
    <location>
        <position position="42"/>
    </location>
</feature>
<feature type="mutagenesis site" description="No nuclear export." evidence="7">
    <original>MVKELQEI</original>
    <variation>AAKEAQEA</variation>
    <location>
        <begin position="45"/>
        <end position="52"/>
    </location>
</feature>
<feature type="mutagenesis site" description="Little change in Tax-stimulated transactivation. No change in Tax-stimulated transactivation; when associated with R-38." evidence="26">
    <original>K</original>
    <variation>R</variation>
    <location>
        <position position="47"/>
    </location>
</feature>
<feature type="mutagenesis site" description="Greatly reduced nuclear localization. Great reduction in its ability to inhibit DNA binding of RELA." evidence="36">
    <original>LHLAVI</original>
    <variation>AHAAVA</variation>
    <location>
        <begin position="115"/>
        <end position="120"/>
    </location>
</feature>
<feature type="mutagenesis site" description="Almost abolished ability to inhibit NF-kappa-B DNA-binding activity; when associated with A-244." evidence="14">
    <original>N</original>
    <variation>A</variation>
    <location>
        <position position="210"/>
    </location>
</feature>
<feature type="mutagenesis site" description="No inducible ubiquitination nor protein degradation." evidence="32">
    <original>S</original>
    <variation>A</variation>
    <location>
        <position position="234"/>
    </location>
</feature>
<feature type="mutagenesis site" description="Almost abolished ability to inhibit NF-kappa-B DNA-binding activity; when associated with A-210." evidence="14">
    <original>N</original>
    <variation>A</variation>
    <location>
        <position position="244"/>
    </location>
</feature>
<feature type="mutagenesis site" description="No inducible ubiquitination nor protein degradation." evidence="32">
    <original>S</original>
    <variation>A</variation>
    <location>
        <position position="262"/>
    </location>
</feature>
<feature type="mutagenesis site" description="No inducible ubiquitination nor protein degradation." evidence="32">
    <original>T</original>
    <variation>A</variation>
    <location>
        <position position="263"/>
    </location>
</feature>
<feature type="turn" evidence="41">
    <location>
        <begin position="72"/>
        <end position="74"/>
    </location>
</feature>
<feature type="helix" evidence="40">
    <location>
        <begin position="79"/>
        <end position="83"/>
    </location>
</feature>
<feature type="strand" evidence="40">
    <location>
        <begin position="87"/>
        <end position="91"/>
    </location>
</feature>
<feature type="helix" evidence="41">
    <location>
        <begin position="101"/>
        <end position="104"/>
    </location>
</feature>
<feature type="helix" evidence="40">
    <location>
        <begin position="114"/>
        <end position="120"/>
    </location>
</feature>
<feature type="helix" evidence="40">
    <location>
        <begin position="124"/>
        <end position="128"/>
    </location>
</feature>
<feature type="helix" evidence="40">
    <location>
        <begin position="147"/>
        <end position="154"/>
    </location>
</feature>
<feature type="helix" evidence="40">
    <location>
        <begin position="157"/>
        <end position="165"/>
    </location>
</feature>
<feature type="turn" evidence="40">
    <location>
        <begin position="167"/>
        <end position="170"/>
    </location>
</feature>
<feature type="strand" evidence="40">
    <location>
        <begin position="171"/>
        <end position="173"/>
    </location>
</feature>
<feature type="helix" evidence="40">
    <location>
        <begin position="175"/>
        <end position="177"/>
    </location>
</feature>
<feature type="helix" evidence="40">
    <location>
        <begin position="186"/>
        <end position="192"/>
    </location>
</feature>
<feature type="helix" evidence="40">
    <location>
        <begin position="196"/>
        <end position="205"/>
    </location>
</feature>
<feature type="turn" evidence="40">
    <location>
        <begin position="214"/>
        <end position="216"/>
    </location>
</feature>
<feature type="helix" evidence="40">
    <location>
        <begin position="220"/>
        <end position="226"/>
    </location>
</feature>
<feature type="helix" evidence="40">
    <location>
        <begin position="230"/>
        <end position="237"/>
    </location>
</feature>
<feature type="turn" evidence="40">
    <location>
        <begin position="238"/>
        <end position="240"/>
    </location>
</feature>
<feature type="helix" evidence="40">
    <location>
        <begin position="253"/>
        <end position="256"/>
    </location>
</feature>
<feature type="helix" evidence="40">
    <location>
        <begin position="263"/>
        <end position="270"/>
    </location>
</feature>
<feature type="helix" evidence="40">
    <location>
        <begin position="275"/>
        <end position="277"/>
    </location>
</feature>
<feature type="turn" evidence="40">
    <location>
        <begin position="285"/>
        <end position="287"/>
    </location>
</feature>
<comment type="function">
    <text evidence="12 24 26 27 28 29">Inhibits the activity of dimeric NF-kappa-B/REL complexes by trapping REL (RELA/p65 and NFKB1/p50) dimers in the cytoplasm by masking their nuclear localization signals (PubMed:1493333, PubMed:36651806, PubMed:7479976). On cellular stimulation by immune and pro-inflammatory responses, becomes phosphorylated promoting ubiquitination and degradation, enabling the dimeric RELA to translocate to the nucleus and activate transcription (PubMed:7479976, PubMed:7628694, PubMed:7796813, PubMed:7878466).</text>
</comment>
<comment type="subunit">
    <text evidence="8 12 13 15 18 20 22 23 25 38">Interacts with RELA; the interaction requires the nuclear import signal (PubMed:1493333). Part of a 70-90 kDa complex at least consisting of CHUK, IKBKB, NFKBIA, RELA, ELP1 and MAP3K14 (PubMed:9751059). Interacts with NKIRAS1 and NKIRAS2 (PubMed:10657303). Interacts with isoform 1 and isoform 2 of RWDD3; the interaction enhances sumoylation (PubMed:17956732, PubMed:23469069). Interacts with PRMT2 (PubMed:16648481). Interacts with PRKACA in platelets; this interaction is disrupted by thrombin and collagen (PubMed:20356841). Interacts with MEFV (PubMed:18577712). Interacts with DDRGK1; positively regulates NFKBIA phosphorylation and degradation (PubMed:23675531). Interacts with HNRNPA2B1; the interaction may be mediated by the RRM2 domain of HNRNPA2B1, and HNRNPA2B1 may interact simultaneously with FAM76B and either NFKBIA or NFKBIE to form a complex (PubMed:37643469).</text>
</comment>
<comment type="subunit">
    <text evidence="4">(Microbial infection) Interacts with HBV protein X.</text>
</comment>
<comment type="interaction">
    <interactant intactId="EBI-307386">
        <id>P25963</id>
    </interactant>
    <interactant intactId="EBI-81249">
        <id>O15111</id>
        <label>CHUK</label>
    </interactant>
    <organismsDiffer>false</organismsDiffer>
    <experiments>16</experiments>
</comment>
<comment type="interaction">
    <interactant intactId="EBI-307386">
        <id>P25963</id>
    </interactant>
    <interactant intactId="EBI-1550112">
        <id>Q8N668</id>
        <label>COMMD1</label>
    </interactant>
    <organismsDiffer>false</organismsDiffer>
    <experiments>3</experiments>
</comment>
<comment type="interaction">
    <interactant intactId="EBI-307386">
        <id>P25963</id>
    </interactant>
    <interactant intactId="EBI-701918">
        <id>P35221</id>
        <label>CTNNA1</label>
    </interactant>
    <organismsDiffer>false</organismsDiffer>
    <experiments>5</experiments>
</comment>
<comment type="interaction">
    <interactant intactId="EBI-307386">
        <id>P25963</id>
    </interactant>
    <interactant intactId="EBI-744099">
        <id>Q9H0I2</id>
        <label>ENKD1</label>
    </interactant>
    <organismsDiffer>false</organismsDiffer>
    <experiments>3</experiments>
</comment>
<comment type="interaction">
    <interactant intactId="EBI-307386">
        <id>P25963</id>
    </interactant>
    <interactant intactId="EBI-355189">
        <id>Q9UKB1</id>
        <label>FBXW11</label>
    </interactant>
    <organismsDiffer>false</organismsDiffer>
    <experiments>3</experiments>
</comment>
<comment type="interaction">
    <interactant intactId="EBI-307386">
        <id>P25963</id>
    </interactant>
    <interactant intactId="EBI-3904795">
        <id>P25098</id>
        <label>GRK2</label>
    </interactant>
    <organismsDiffer>false</organismsDiffer>
    <experiments>2</experiments>
</comment>
<comment type="interaction">
    <interactant intactId="EBI-307386">
        <id>P25963</id>
    </interactant>
    <interactant intactId="EBI-7149314">
        <id>P34947</id>
        <label>GRK5</label>
    </interactant>
    <organismsDiffer>false</organismsDiffer>
    <experiments>2</experiments>
</comment>
<comment type="interaction">
    <interactant intactId="EBI-307386">
        <id>P25963</id>
    </interactant>
    <interactant intactId="EBI-745632">
        <id>Q9NWT6</id>
        <label>HIF1AN</label>
    </interactant>
    <organismsDiffer>false</organismsDiffer>
    <experiments>7</experiments>
</comment>
<comment type="interaction">
    <interactant intactId="EBI-307386">
        <id>P25963</id>
    </interactant>
    <interactant intactId="EBI-81266">
        <id>O14920</id>
        <label>IKBKB</label>
    </interactant>
    <organismsDiffer>false</organismsDiffer>
    <experiments>27</experiments>
</comment>
<comment type="interaction">
    <interactant intactId="EBI-307386">
        <id>P25963</id>
    </interactant>
    <interactant intactId="EBI-81279">
        <id>Q9Y6K9</id>
        <label>IKBKG</label>
    </interactant>
    <organismsDiffer>false</organismsDiffer>
    <experiments>6</experiments>
</comment>
<comment type="interaction">
    <interactant intactId="EBI-307386">
        <id>P25963</id>
    </interactant>
    <interactant intactId="EBI-2108053">
        <id>Q14511</id>
        <label>NEDD9</label>
    </interactant>
    <organismsDiffer>false</organismsDiffer>
    <experiments>3</experiments>
</comment>
<comment type="interaction">
    <interactant intactId="EBI-307386">
        <id>P25963</id>
    </interactant>
    <interactant intactId="EBI-11746523">
        <id>Q14511-2</id>
        <label>NEDD9</label>
    </interactant>
    <organismsDiffer>false</organismsDiffer>
    <experiments>3</experiments>
</comment>
<comment type="interaction">
    <interactant intactId="EBI-307386">
        <id>P25963</id>
    </interactant>
    <interactant intactId="EBI-300010">
        <id>P19838</id>
        <label>NFKB1</label>
    </interactant>
    <organismsDiffer>false</organismsDiffer>
    <experiments>10</experiments>
</comment>
<comment type="interaction">
    <interactant intactId="EBI-307386">
        <id>P25963</id>
    </interactant>
    <interactant intactId="EBI-307326">
        <id>Q00653</id>
        <label>NFKB2</label>
    </interactant>
    <organismsDiffer>false</organismsDiffer>
    <experiments>4</experiments>
</comment>
<comment type="interaction">
    <interactant intactId="EBI-307386">
        <id>P25963</id>
    </interactant>
    <interactant intactId="EBI-307386">
        <id>P25963</id>
        <label>NFKBIA</label>
    </interactant>
    <organismsDiffer>false</organismsDiffer>
    <experiments>2</experiments>
</comment>
<comment type="interaction">
    <interactant intactId="EBI-307386">
        <id>P25963</id>
    </interactant>
    <interactant intactId="EBI-352889">
        <id>Q15653</id>
        <label>NFKBIB</label>
    </interactant>
    <organismsDiffer>false</organismsDiffer>
    <experiments>2</experiments>
</comment>
<comment type="interaction">
    <interactant intactId="EBI-307386">
        <id>P25963</id>
    </interactant>
    <interactant intactId="EBI-11956563">
        <id>Q96HA1-2</id>
        <label>POM121</label>
    </interactant>
    <organismsDiffer>false</organismsDiffer>
    <experiments>3</experiments>
</comment>
<comment type="interaction">
    <interactant intactId="EBI-307386">
        <id>P25963</id>
    </interactant>
    <interactant intactId="EBI-357622">
        <id>O43242</id>
        <label>PSMD3</label>
    </interactant>
    <organismsDiffer>false</organismsDiffer>
    <experiments>3</experiments>
</comment>
<comment type="interaction">
    <interactant intactId="EBI-307386">
        <id>P25963</id>
    </interactant>
    <interactant intactId="EBI-307352">
        <id>Q04864</id>
        <label>REL</label>
    </interactant>
    <organismsDiffer>false</organismsDiffer>
    <experiments>5</experiments>
</comment>
<comment type="interaction">
    <interactant intactId="EBI-307386">
        <id>P25963</id>
    </interactant>
    <interactant intactId="EBI-73886">
        <id>Q04206</id>
        <label>RELA</label>
    </interactant>
    <organismsDiffer>false</organismsDiffer>
    <experiments>27</experiments>
</comment>
<comment type="interaction">
    <interactant intactId="EBI-307386">
        <id>P25963</id>
    </interactant>
    <interactant intactId="EBI-289947">
        <id>Q04206-2</id>
        <label>RELA</label>
    </interactant>
    <organismsDiffer>false</organismsDiffer>
    <experiments>2</experiments>
</comment>
<comment type="interaction">
    <interactant intactId="EBI-307386">
        <id>P25963</id>
    </interactant>
    <interactant intactId="EBI-351193">
        <id>P23396</id>
        <label>RPS3</label>
    </interactant>
    <organismsDiffer>false</organismsDiffer>
    <experiments>6</experiments>
</comment>
<comment type="interaction">
    <interactant intactId="EBI-307386">
        <id>P25963</id>
    </interactant>
    <interactant intactId="EBI-749995">
        <id>P56279</id>
        <label>TCL1A</label>
    </interactant>
    <organismsDiffer>false</organismsDiffer>
    <experiments>3</experiments>
</comment>
<comment type="interaction">
    <interactant intactId="EBI-307386">
        <id>P25963</id>
    </interactant>
    <interactant intactId="EBI-3390054">
        <id>P0CG48</id>
        <label>UBC</label>
    </interactant>
    <organismsDiffer>false</organismsDiffer>
    <experiments>3</experiments>
</comment>
<comment type="interaction">
    <interactant intactId="EBI-307386">
        <id>P25963</id>
    </interactant>
    <interactant intactId="EBI-646264">
        <id>Q60680-2</id>
        <label>Chuk</label>
    </interactant>
    <organismsDiffer>true</organismsDiffer>
    <experiments>2</experiments>
</comment>
<comment type="interaction">
    <interactant intactId="EBI-307386">
        <id>P25963</id>
    </interactant>
    <interactant intactId="EBI-7967856">
        <id>Q9J0X9</id>
        <label>UL54</label>
    </interactant>
    <organismsDiffer>true</organismsDiffer>
    <experiments>3</experiments>
</comment>
<comment type="interaction">
    <interactant intactId="EBI-307386">
        <id>P25963</id>
    </interactant>
    <interactant intactId="EBI-465733">
        <id>P14340</id>
    </interactant>
    <organismsDiffer>true</organismsDiffer>
    <experiments>2</experiments>
</comment>
<comment type="interaction">
    <interactant intactId="EBI-307386">
        <id>P25963</id>
    </interactant>
    <interactant intactId="EBI-9825968">
        <id>PRO_0000037965</id>
        <dbReference type="UniProtKB" id="P14340"/>
    </interactant>
    <organismsDiffer>true</organismsDiffer>
    <experiments>2</experiments>
</comment>
<comment type="interaction">
    <interactant intactId="EBI-307386">
        <id>P25963</id>
    </interactant>
    <interactant intactId="EBI-12558622">
        <id>PRO_0000038062</id>
        <dbReference type="UniProtKB" id="P21530"/>
    </interactant>
    <organismsDiffer>true</organismsDiffer>
    <experiments>4</experiments>
</comment>
<comment type="interaction">
    <interactant intactId="EBI-307386">
        <id>P25963</id>
    </interactant>
    <interactant intactId="EBI-11361108">
        <id>Q9E7P0</id>
    </interactant>
    <organismsDiffer>true</organismsDiffer>
    <experiments>2</experiments>
</comment>
<comment type="subcellular location">
    <subcellularLocation>
        <location evidence="7">Cytoplasm</location>
    </subcellularLocation>
    <subcellularLocation>
        <location evidence="7 13 36">Nucleus</location>
    </subcellularLocation>
    <text evidence="7 36">Shuttles between the nucleus and the cytoplasm by a nuclear localization signal (NLS) and a CRM1-dependent nuclear export.</text>
</comment>
<comment type="induction">
    <text evidence="16">Induced in adherent monocytes.</text>
</comment>
<comment type="PTM">
    <text evidence="2 5 9 27 28 29 31 34 35 37">Phosphorylated at Ser-32 and Ser-36 by IKKA/CHUK and IKKB/IKBKB; disables inhibition of NF-kappa-B DNA-binding activity (PubMed:10329681, PubMed:10882136, PubMed:7628694, PubMed:7796813, PubMed:7878466, PubMed:8631829, PubMed:9701247). Phosphorylation at positions 32 and 36 is prerequisite to recognition by the SCF(FBXW11) and SCF(BTRC) complexes, leading to polyubiquitination and subsequent degradation (PubMed:10329681, PubMed:7628694, PubMed:8631829, PubMed:9701247). Phosphorylated at Ser-32 in response to FK506 treatment: phosphorylation is independent of IKKA/CHUK and IKKB/IKBKB and promotes NFKBIA degradation, followed by NF-kappa-B activation (PubMed:10574930). Phosphorylated at Tyr-42: its effect is however unclear (PubMed:8797825, PubMed:8940099). According to a report, phosphorylation at Tyr-42 activates NF-kappa-B without triggering proteolytic degradation of NFKBIA (PubMed:8797825). According to another publication, phosphorylation at Tyr-42 inhibits NF-kappa-B activity by preventing phosphorylation at Ser-32 and Ser-36 and subsequent ubiquitination and degradation (PubMed:8940099).</text>
</comment>
<comment type="PTM">
    <text evidence="2 3 6 19 24 26 27 31 37">Polyubiquitinated at Lys-21 and/or Lys-22 following phosphorylation at Ser-32 and Ser-36 (PubMed:10329681, PubMed:20347421, PubMed:7479976, PubMed:8631829, PubMed:9701247). Monoubiquitinated at Lys-21 and/or Lys-22 by UBE2D3 (PubMed:10329681, PubMed:20347421, PubMed:7479976). Ubiquitin chain elongation is then performed by CDC34 in cooperation with the SCF(FBXW11) E3 ligase complex, building ubiquitin chains from the UBE2D3-primed NFKBIA-linked ubiquitin (PubMed:10437795, PubMed:20347421). The resulting polyubiquitination leads to protein degradation (PubMed:20347421, PubMed:7479976, PubMed:7628694). Also ubiquitinated by the SCF(BTRC) complex following stimulus-dependent phosphorylation at Ser-32 and Ser-36 (PubMed:10644755). Deubiquitinated by USP38, leading to NF-kappa-B inhibition (PubMed:36651806).</text>
</comment>
<comment type="PTM">
    <text evidence="10 15 21">Sumoylated; sumoylation requires the presence of the nuclear import signal. Sumoylation blocks ubiquitination and proteasome-mediated degradation of the protein thereby increasing the protein stability.</text>
</comment>
<comment type="PTM">
    <text evidence="14">Hydroxylated by HIF1AN.</text>
</comment>
<comment type="PTM">
    <text evidence="21">(Microbial infection) Deubiquitinated by porcine reproductive and respiratory syndrome virus Nsp2 protein, which thereby interferes with NFKBIA degradation and impairs subsequent NF-kappa-B activation.</text>
</comment>
<comment type="disease" evidence="11 17">
    <disease id="DI-00425">
        <name>Ectodermal dysplasia and immunodeficiency 2</name>
        <acronym>EDAID2</acronym>
        <description>A form of ectoderma dysplasia, a heterogeneous group of disorders due to abnormal development of two or more ectodermal structures. This form of ectodermal dysplasia is associated with decreased production of pro-inflammatory cytokines and certain interferons, rendering patients susceptible to infection. EDAID2 inheritance is autosomal dominant.</description>
        <dbReference type="MIM" id="612132"/>
    </disease>
    <text>The disease is caused by variants affecting the gene represented in this entry.</text>
</comment>
<comment type="similarity">
    <text evidence="39">Belongs to the NF-kappa-B inhibitor family.</text>
</comment>
<comment type="online information" name="NFKBIAbase">
    <link uri="https://databases.lovd.nl/shared/genes/NFKBIA"/>
    <text>NFKBIA mutation db</text>
</comment>
<evidence type="ECO:0000256" key="1">
    <source>
        <dbReference type="SAM" id="MobiDB-lite"/>
    </source>
</evidence>
<evidence type="ECO:0000269" key="2">
    <source>
    </source>
</evidence>
<evidence type="ECO:0000269" key="3">
    <source>
    </source>
</evidence>
<evidence type="ECO:0000269" key="4">
    <source>
    </source>
</evidence>
<evidence type="ECO:0000269" key="5">
    <source>
    </source>
</evidence>
<evidence type="ECO:0000269" key="6">
    <source>
    </source>
</evidence>
<evidence type="ECO:0000269" key="7">
    <source>
    </source>
</evidence>
<evidence type="ECO:0000269" key="8">
    <source>
    </source>
</evidence>
<evidence type="ECO:0000269" key="9">
    <source>
    </source>
</evidence>
<evidence type="ECO:0000269" key="10">
    <source>
    </source>
</evidence>
<evidence type="ECO:0000269" key="11">
    <source>
    </source>
</evidence>
<evidence type="ECO:0000269" key="12">
    <source>
    </source>
</evidence>
<evidence type="ECO:0000269" key="13">
    <source>
    </source>
</evidence>
<evidence type="ECO:0000269" key="14">
    <source>
    </source>
</evidence>
<evidence type="ECO:0000269" key="15">
    <source>
    </source>
</evidence>
<evidence type="ECO:0000269" key="16">
    <source>
    </source>
</evidence>
<evidence type="ECO:0000269" key="17">
    <source>
    </source>
</evidence>
<evidence type="ECO:0000269" key="18">
    <source>
    </source>
</evidence>
<evidence type="ECO:0000269" key="19">
    <source>
    </source>
</evidence>
<evidence type="ECO:0000269" key="20">
    <source>
    </source>
</evidence>
<evidence type="ECO:0000269" key="21">
    <source>
    </source>
</evidence>
<evidence type="ECO:0000269" key="22">
    <source>
    </source>
</evidence>
<evidence type="ECO:0000269" key="23">
    <source>
    </source>
</evidence>
<evidence type="ECO:0000269" key="24">
    <source>
    </source>
</evidence>
<evidence type="ECO:0000269" key="25">
    <source>
    </source>
</evidence>
<evidence type="ECO:0000269" key="26">
    <source>
    </source>
</evidence>
<evidence type="ECO:0000269" key="27">
    <source>
    </source>
</evidence>
<evidence type="ECO:0000269" key="28">
    <source>
    </source>
</evidence>
<evidence type="ECO:0000269" key="29">
    <source>
    </source>
</evidence>
<evidence type="ECO:0000269" key="30">
    <source>
    </source>
</evidence>
<evidence type="ECO:0000269" key="31">
    <source>
    </source>
</evidence>
<evidence type="ECO:0000269" key="32">
    <source>
    </source>
</evidence>
<evidence type="ECO:0000269" key="33">
    <source>
    </source>
</evidence>
<evidence type="ECO:0000269" key="34">
    <source>
    </source>
</evidence>
<evidence type="ECO:0000269" key="35">
    <source>
    </source>
</evidence>
<evidence type="ECO:0000269" key="36">
    <source>
    </source>
</evidence>
<evidence type="ECO:0000269" key="37">
    <source>
    </source>
</evidence>
<evidence type="ECO:0000269" key="38">
    <source>
    </source>
</evidence>
<evidence type="ECO:0000305" key="39"/>
<evidence type="ECO:0007829" key="40">
    <source>
        <dbReference type="PDB" id="1IKN"/>
    </source>
</evidence>
<evidence type="ECO:0007829" key="41">
    <source>
        <dbReference type="PDB" id="1NFI"/>
    </source>
</evidence>
<accession>P25963</accession>
<accession>B2R8L6</accession>